<feature type="chain" id="PRO_1000069547" description="NAD-dependent malic enzyme">
    <location>
        <begin position="1"/>
        <end position="562"/>
    </location>
</feature>
<feature type="active site" description="Proton donor" evidence="1">
    <location>
        <position position="101"/>
    </location>
</feature>
<feature type="active site" description="Proton acceptor" evidence="1">
    <location>
        <position position="172"/>
    </location>
</feature>
<feature type="binding site" evidence="1">
    <location>
        <position position="154"/>
    </location>
    <ligand>
        <name>NAD(+)</name>
        <dbReference type="ChEBI" id="CHEBI:57540"/>
    </ligand>
</feature>
<feature type="binding site" evidence="1">
    <location>
        <position position="243"/>
    </location>
    <ligand>
        <name>a divalent metal cation</name>
        <dbReference type="ChEBI" id="CHEBI:60240"/>
    </ligand>
</feature>
<feature type="binding site" evidence="1">
    <location>
        <position position="244"/>
    </location>
    <ligand>
        <name>a divalent metal cation</name>
        <dbReference type="ChEBI" id="CHEBI:60240"/>
    </ligand>
</feature>
<feature type="binding site" evidence="1">
    <location>
        <position position="267"/>
    </location>
    <ligand>
        <name>a divalent metal cation</name>
        <dbReference type="ChEBI" id="CHEBI:60240"/>
    </ligand>
</feature>
<feature type="binding site" evidence="1">
    <location>
        <position position="267"/>
    </location>
    <ligand>
        <name>NAD(+)</name>
        <dbReference type="ChEBI" id="CHEBI:57540"/>
    </ligand>
</feature>
<feature type="binding site" evidence="1">
    <location>
        <position position="415"/>
    </location>
    <ligand>
        <name>NAD(+)</name>
        <dbReference type="ChEBI" id="CHEBI:57540"/>
    </ligand>
</feature>
<feature type="site" description="Important for activity" evidence="1">
    <location>
        <position position="267"/>
    </location>
</feature>
<gene>
    <name evidence="1" type="primary">maeA</name>
    <name type="ordered locus">Shewmr7_0778</name>
</gene>
<accession>Q0HYM7</accession>
<evidence type="ECO:0000255" key="1">
    <source>
        <dbReference type="HAMAP-Rule" id="MF_01619"/>
    </source>
</evidence>
<keyword id="KW-0479">Metal-binding</keyword>
<keyword id="KW-0520">NAD</keyword>
<keyword id="KW-0560">Oxidoreductase</keyword>
<proteinExistence type="inferred from homology"/>
<protein>
    <recommendedName>
        <fullName evidence="1">NAD-dependent malic enzyme</fullName>
        <shortName evidence="1">NAD-ME</shortName>
        <ecNumber evidence="1">1.1.1.38</ecNumber>
    </recommendedName>
</protein>
<name>MAO1_SHESR</name>
<comment type="catalytic activity">
    <reaction evidence="1">
        <text>(S)-malate + NAD(+) = pyruvate + CO2 + NADH</text>
        <dbReference type="Rhea" id="RHEA:12653"/>
        <dbReference type="ChEBI" id="CHEBI:15361"/>
        <dbReference type="ChEBI" id="CHEBI:15589"/>
        <dbReference type="ChEBI" id="CHEBI:16526"/>
        <dbReference type="ChEBI" id="CHEBI:57540"/>
        <dbReference type="ChEBI" id="CHEBI:57945"/>
        <dbReference type="EC" id="1.1.1.38"/>
    </reaction>
</comment>
<comment type="catalytic activity">
    <reaction evidence="1">
        <text>oxaloacetate + H(+) = pyruvate + CO2</text>
        <dbReference type="Rhea" id="RHEA:15641"/>
        <dbReference type="ChEBI" id="CHEBI:15361"/>
        <dbReference type="ChEBI" id="CHEBI:15378"/>
        <dbReference type="ChEBI" id="CHEBI:16452"/>
        <dbReference type="ChEBI" id="CHEBI:16526"/>
        <dbReference type="EC" id="1.1.1.38"/>
    </reaction>
</comment>
<comment type="cofactor">
    <cofactor evidence="1">
        <name>Mg(2+)</name>
        <dbReference type="ChEBI" id="CHEBI:18420"/>
    </cofactor>
    <cofactor evidence="1">
        <name>Mn(2+)</name>
        <dbReference type="ChEBI" id="CHEBI:29035"/>
    </cofactor>
    <text evidence="1">Divalent metal cations. Prefers magnesium or manganese.</text>
</comment>
<comment type="subunit">
    <text evidence="1">Homotetramer.</text>
</comment>
<comment type="similarity">
    <text evidence="1">Belongs to the malic enzymes family.</text>
</comment>
<reference key="1">
    <citation type="submission" date="2006-08" db="EMBL/GenBank/DDBJ databases">
        <title>Complete sequence of chromosome 1 of Shewanella sp. MR-7.</title>
        <authorList>
            <person name="Copeland A."/>
            <person name="Lucas S."/>
            <person name="Lapidus A."/>
            <person name="Barry K."/>
            <person name="Detter J.C."/>
            <person name="Glavina del Rio T."/>
            <person name="Hammon N."/>
            <person name="Israni S."/>
            <person name="Dalin E."/>
            <person name="Tice H."/>
            <person name="Pitluck S."/>
            <person name="Kiss H."/>
            <person name="Brettin T."/>
            <person name="Bruce D."/>
            <person name="Han C."/>
            <person name="Tapia R."/>
            <person name="Gilna P."/>
            <person name="Schmutz J."/>
            <person name="Larimer F."/>
            <person name="Land M."/>
            <person name="Hauser L."/>
            <person name="Kyrpides N."/>
            <person name="Mikhailova N."/>
            <person name="Nealson K."/>
            <person name="Konstantinidis K."/>
            <person name="Klappenbach J."/>
            <person name="Tiedje J."/>
            <person name="Richardson P."/>
        </authorList>
    </citation>
    <scope>NUCLEOTIDE SEQUENCE [LARGE SCALE GENOMIC DNA]</scope>
    <source>
        <strain>MR-7</strain>
    </source>
</reference>
<sequence length="562" mass="62222">MDDNKRPLYLPFAGPAILEAPLINKGSAFSEEERIFFNLEGLVPYAIETIEEQASRAYDQFRSFNNDLDKHIYLRNIQDTNETLFYRLVQNHISEMMPIIYTPTVGLACERFSKNYRRNRGLFISYPNKDRIDDILNNSTRQKVKIIVVTDGERILGLGDQGIGGMGIPIGKLSLYTSCGGISPAYTLPITLDVGTDNPQLLEDPMYMGWRHPRIGGEEYAEFIEAFMQAVHVRWPDTLIQFEDFAQKNAMPILERYKERYCCFNDDIQGTAAVTVGSLLAACKAAGTELNKQRVAFLGAGSAGCGIAEAIVAQMVSEGISDEQARSQVCMVDRWGLLLDNMPNLLPFQQKLAQKCADISHWNNFSDNISLLDVVNNVKPTVLIGVSGAPGLFTEEIVRAMHSHCERPIIFPLSNPTSRVEATPKDILHWTSGQALVATGSPFEPVVVDGETYEIAQCNNSFIFPGIGLGVLASGARHVSDAMLMASSRALAECSPLAINGSGPLLPKLEDIHSVSKHIAFAVGKVAIEQGLSLPASDELLMQSIEDNFWKPEYRRYKRTSF</sequence>
<dbReference type="EC" id="1.1.1.38" evidence="1"/>
<dbReference type="EMBL" id="CP000444">
    <property type="protein sequence ID" value="ABI41778.1"/>
    <property type="molecule type" value="Genomic_DNA"/>
</dbReference>
<dbReference type="SMR" id="Q0HYM7"/>
<dbReference type="KEGG" id="shm:Shewmr7_0778"/>
<dbReference type="HOGENOM" id="CLU_011405_5_2_6"/>
<dbReference type="GO" id="GO:0005829">
    <property type="term" value="C:cytosol"/>
    <property type="evidence" value="ECO:0007669"/>
    <property type="project" value="TreeGrafter"/>
</dbReference>
<dbReference type="GO" id="GO:0004471">
    <property type="term" value="F:malate dehydrogenase (decarboxylating) (NAD+) activity"/>
    <property type="evidence" value="ECO:0007669"/>
    <property type="project" value="UniProtKB-UniRule"/>
</dbReference>
<dbReference type="GO" id="GO:0046872">
    <property type="term" value="F:metal ion binding"/>
    <property type="evidence" value="ECO:0007669"/>
    <property type="project" value="UniProtKB-KW"/>
</dbReference>
<dbReference type="GO" id="GO:0051287">
    <property type="term" value="F:NAD binding"/>
    <property type="evidence" value="ECO:0007669"/>
    <property type="project" value="InterPro"/>
</dbReference>
<dbReference type="GO" id="GO:0008948">
    <property type="term" value="F:oxaloacetate decarboxylase activity"/>
    <property type="evidence" value="ECO:0007669"/>
    <property type="project" value="UniProtKB-UniRule"/>
</dbReference>
<dbReference type="GO" id="GO:0006108">
    <property type="term" value="P:malate metabolic process"/>
    <property type="evidence" value="ECO:0007669"/>
    <property type="project" value="TreeGrafter"/>
</dbReference>
<dbReference type="CDD" id="cd05312">
    <property type="entry name" value="NAD_bind_1_malic_enz"/>
    <property type="match status" value="1"/>
</dbReference>
<dbReference type="FunFam" id="3.40.50.10380:FF:000001">
    <property type="entry name" value="NAD-dependent malic enzyme"/>
    <property type="match status" value="1"/>
</dbReference>
<dbReference type="FunFam" id="3.40.50.720:FF:000055">
    <property type="entry name" value="NAD-dependent malic enzyme"/>
    <property type="match status" value="1"/>
</dbReference>
<dbReference type="Gene3D" id="3.40.50.10380">
    <property type="entry name" value="Malic enzyme, N-terminal domain"/>
    <property type="match status" value="1"/>
</dbReference>
<dbReference type="Gene3D" id="3.40.50.720">
    <property type="entry name" value="NAD(P)-binding Rossmann-like Domain"/>
    <property type="match status" value="1"/>
</dbReference>
<dbReference type="HAMAP" id="MF_01619">
    <property type="entry name" value="NAD_malic_enz"/>
    <property type="match status" value="1"/>
</dbReference>
<dbReference type="InterPro" id="IPR046346">
    <property type="entry name" value="Aminoacid_DH-like_N_sf"/>
</dbReference>
<dbReference type="InterPro" id="IPR015884">
    <property type="entry name" value="Malic_enzyme_CS"/>
</dbReference>
<dbReference type="InterPro" id="IPR012301">
    <property type="entry name" value="Malic_N_dom"/>
</dbReference>
<dbReference type="InterPro" id="IPR037062">
    <property type="entry name" value="Malic_N_dom_sf"/>
</dbReference>
<dbReference type="InterPro" id="IPR012302">
    <property type="entry name" value="Malic_NAD-bd"/>
</dbReference>
<dbReference type="InterPro" id="IPR001891">
    <property type="entry name" value="Malic_OxRdtase"/>
</dbReference>
<dbReference type="InterPro" id="IPR036291">
    <property type="entry name" value="NAD(P)-bd_dom_sf"/>
</dbReference>
<dbReference type="InterPro" id="IPR023667">
    <property type="entry name" value="NAD_malic_enz_proteobac"/>
</dbReference>
<dbReference type="NCBIfam" id="NF010052">
    <property type="entry name" value="PRK13529.1"/>
    <property type="match status" value="1"/>
</dbReference>
<dbReference type="PANTHER" id="PTHR23406">
    <property type="entry name" value="MALIC ENZYME-RELATED"/>
    <property type="match status" value="1"/>
</dbReference>
<dbReference type="PANTHER" id="PTHR23406:SF34">
    <property type="entry name" value="NAD-DEPENDENT MALIC ENZYME, MITOCHONDRIAL"/>
    <property type="match status" value="1"/>
</dbReference>
<dbReference type="Pfam" id="PF00390">
    <property type="entry name" value="malic"/>
    <property type="match status" value="1"/>
</dbReference>
<dbReference type="Pfam" id="PF03949">
    <property type="entry name" value="Malic_M"/>
    <property type="match status" value="1"/>
</dbReference>
<dbReference type="PIRSF" id="PIRSF000106">
    <property type="entry name" value="ME"/>
    <property type="match status" value="1"/>
</dbReference>
<dbReference type="PRINTS" id="PR00072">
    <property type="entry name" value="MALOXRDTASE"/>
</dbReference>
<dbReference type="SMART" id="SM01274">
    <property type="entry name" value="malic"/>
    <property type="match status" value="1"/>
</dbReference>
<dbReference type="SMART" id="SM00919">
    <property type="entry name" value="Malic_M"/>
    <property type="match status" value="1"/>
</dbReference>
<dbReference type="SUPFAM" id="SSF53223">
    <property type="entry name" value="Aminoacid dehydrogenase-like, N-terminal domain"/>
    <property type="match status" value="1"/>
</dbReference>
<dbReference type="SUPFAM" id="SSF51735">
    <property type="entry name" value="NAD(P)-binding Rossmann-fold domains"/>
    <property type="match status" value="1"/>
</dbReference>
<dbReference type="PROSITE" id="PS00331">
    <property type="entry name" value="MALIC_ENZYMES"/>
    <property type="match status" value="1"/>
</dbReference>
<organism>
    <name type="scientific">Shewanella sp. (strain MR-7)</name>
    <dbReference type="NCBI Taxonomy" id="60481"/>
    <lineage>
        <taxon>Bacteria</taxon>
        <taxon>Pseudomonadati</taxon>
        <taxon>Pseudomonadota</taxon>
        <taxon>Gammaproteobacteria</taxon>
        <taxon>Alteromonadales</taxon>
        <taxon>Shewanellaceae</taxon>
        <taxon>Shewanella</taxon>
    </lineage>
</organism>